<gene>
    <name evidence="1" type="primary">hscB</name>
    <name type="ordered locus">RP201</name>
</gene>
<accession>Q9ZDW4</accession>
<protein>
    <recommendedName>
        <fullName evidence="1">Co-chaperone protein HscB homolog</fullName>
    </recommendedName>
</protein>
<proteinExistence type="inferred from homology"/>
<reference key="1">
    <citation type="journal article" date="1998" name="Nature">
        <title>The genome sequence of Rickettsia prowazekii and the origin of mitochondria.</title>
        <authorList>
            <person name="Andersson S.G.E."/>
            <person name="Zomorodipour A."/>
            <person name="Andersson J.O."/>
            <person name="Sicheritz-Ponten T."/>
            <person name="Alsmark U.C.M."/>
            <person name="Podowski R.M."/>
            <person name="Naeslund A.K."/>
            <person name="Eriksson A.-S."/>
            <person name="Winkler H.H."/>
            <person name="Kurland C.G."/>
        </authorList>
    </citation>
    <scope>NUCLEOTIDE SEQUENCE [LARGE SCALE GENOMIC DNA]</scope>
    <source>
        <strain>Madrid E</strain>
    </source>
</reference>
<feature type="chain" id="PRO_0000070985" description="Co-chaperone protein HscB homolog">
    <location>
        <begin position="1"/>
        <end position="166"/>
    </location>
</feature>
<feature type="domain" description="J" evidence="1">
    <location>
        <begin position="3"/>
        <end position="73"/>
    </location>
</feature>
<comment type="function">
    <text evidence="1">Co-chaperone involved in the maturation of iron-sulfur cluster-containing proteins. Seems to help targeting proteins to be folded toward HscA.</text>
</comment>
<comment type="subunit">
    <text evidence="1">Interacts with HscA and stimulates its ATPase activity.</text>
</comment>
<comment type="similarity">
    <text evidence="1">Belongs to the HscB family.</text>
</comment>
<comment type="sequence caution" evidence="2">
    <conflict type="erroneous initiation">
        <sequence resource="EMBL-CDS" id="CAA14666"/>
    </conflict>
</comment>
<sequence>MQNYFQLLELPQEYNIDLKILEKQYFAMQVKYHPDTAKTAQEKAQNLITSTELNKAYSTLKDALKRAEYMLLLQNINLNDEKIRSLLSPLELSIFWDEMERIENTTLFSDLEKLKNKYELMQQQNINSLKQAFVEQNLSDATIYTSKLKYIRTLQSKLQEKIKSCK</sequence>
<name>HSCB_RICPR</name>
<dbReference type="EMBL" id="AJ235270">
    <property type="protein sequence ID" value="CAA14666.1"/>
    <property type="status" value="ALT_INIT"/>
    <property type="molecule type" value="Genomic_DNA"/>
</dbReference>
<dbReference type="PIR" id="C71731">
    <property type="entry name" value="C71731"/>
</dbReference>
<dbReference type="RefSeq" id="NP_220589.2">
    <property type="nucleotide sequence ID" value="NC_000963.1"/>
</dbReference>
<dbReference type="RefSeq" id="WP_004595975.1">
    <property type="nucleotide sequence ID" value="NC_000963.1"/>
</dbReference>
<dbReference type="SMR" id="Q9ZDW4"/>
<dbReference type="STRING" id="272947.gene:17555282"/>
<dbReference type="EnsemblBacteria" id="CAA14666">
    <property type="protein sequence ID" value="CAA14666"/>
    <property type="gene ID" value="CAA14666"/>
</dbReference>
<dbReference type="GeneID" id="57569329"/>
<dbReference type="KEGG" id="rpr:RP201"/>
<dbReference type="PATRIC" id="fig|272947.5.peg.210"/>
<dbReference type="eggNOG" id="COG1076">
    <property type="taxonomic scope" value="Bacteria"/>
</dbReference>
<dbReference type="HOGENOM" id="CLU_068529_2_0_5"/>
<dbReference type="OrthoDB" id="287587at2"/>
<dbReference type="Proteomes" id="UP000002480">
    <property type="component" value="Chromosome"/>
</dbReference>
<dbReference type="GO" id="GO:0001671">
    <property type="term" value="F:ATPase activator activity"/>
    <property type="evidence" value="ECO:0007669"/>
    <property type="project" value="InterPro"/>
</dbReference>
<dbReference type="GO" id="GO:0051087">
    <property type="term" value="F:protein-folding chaperone binding"/>
    <property type="evidence" value="ECO:0007669"/>
    <property type="project" value="InterPro"/>
</dbReference>
<dbReference type="GO" id="GO:0044571">
    <property type="term" value="P:[2Fe-2S] cluster assembly"/>
    <property type="evidence" value="ECO:0007669"/>
    <property type="project" value="InterPro"/>
</dbReference>
<dbReference type="GO" id="GO:0051259">
    <property type="term" value="P:protein complex oligomerization"/>
    <property type="evidence" value="ECO:0007669"/>
    <property type="project" value="InterPro"/>
</dbReference>
<dbReference type="GO" id="GO:0006457">
    <property type="term" value="P:protein folding"/>
    <property type="evidence" value="ECO:0007669"/>
    <property type="project" value="UniProtKB-UniRule"/>
</dbReference>
<dbReference type="CDD" id="cd06257">
    <property type="entry name" value="DnaJ"/>
    <property type="match status" value="1"/>
</dbReference>
<dbReference type="Gene3D" id="1.10.287.110">
    <property type="entry name" value="DnaJ domain"/>
    <property type="match status" value="1"/>
</dbReference>
<dbReference type="Gene3D" id="1.20.1280.20">
    <property type="entry name" value="HscB, C-terminal domain"/>
    <property type="match status" value="1"/>
</dbReference>
<dbReference type="HAMAP" id="MF_00682">
    <property type="entry name" value="HscB"/>
    <property type="match status" value="1"/>
</dbReference>
<dbReference type="InterPro" id="IPR001623">
    <property type="entry name" value="DnaJ_domain"/>
</dbReference>
<dbReference type="InterPro" id="IPR004640">
    <property type="entry name" value="HscB"/>
</dbReference>
<dbReference type="InterPro" id="IPR036386">
    <property type="entry name" value="HscB_C_sf"/>
</dbReference>
<dbReference type="InterPro" id="IPR009073">
    <property type="entry name" value="HscB_oligo_C"/>
</dbReference>
<dbReference type="InterPro" id="IPR036869">
    <property type="entry name" value="J_dom_sf"/>
</dbReference>
<dbReference type="NCBIfam" id="TIGR00714">
    <property type="entry name" value="hscB"/>
    <property type="match status" value="1"/>
</dbReference>
<dbReference type="PANTHER" id="PTHR14021">
    <property type="entry name" value="IRON-SULFUR CLUSTER CO-CHAPERONE PROTEIN HSCB"/>
    <property type="match status" value="1"/>
</dbReference>
<dbReference type="PANTHER" id="PTHR14021:SF15">
    <property type="entry name" value="IRON-SULFUR CLUSTER CO-CHAPERONE PROTEIN HSCB"/>
    <property type="match status" value="1"/>
</dbReference>
<dbReference type="Pfam" id="PF00226">
    <property type="entry name" value="DnaJ"/>
    <property type="match status" value="1"/>
</dbReference>
<dbReference type="Pfam" id="PF07743">
    <property type="entry name" value="HSCB_C"/>
    <property type="match status" value="1"/>
</dbReference>
<dbReference type="SMART" id="SM00271">
    <property type="entry name" value="DnaJ"/>
    <property type="match status" value="1"/>
</dbReference>
<dbReference type="SUPFAM" id="SSF46565">
    <property type="entry name" value="Chaperone J-domain"/>
    <property type="match status" value="1"/>
</dbReference>
<dbReference type="SUPFAM" id="SSF47144">
    <property type="entry name" value="HSC20 (HSCB), C-terminal oligomerisation domain"/>
    <property type="match status" value="1"/>
</dbReference>
<dbReference type="PROSITE" id="PS50076">
    <property type="entry name" value="DNAJ_2"/>
    <property type="match status" value="1"/>
</dbReference>
<evidence type="ECO:0000255" key="1">
    <source>
        <dbReference type="HAMAP-Rule" id="MF_00682"/>
    </source>
</evidence>
<evidence type="ECO:0000305" key="2"/>
<organism>
    <name type="scientific">Rickettsia prowazekii (strain Madrid E)</name>
    <dbReference type="NCBI Taxonomy" id="272947"/>
    <lineage>
        <taxon>Bacteria</taxon>
        <taxon>Pseudomonadati</taxon>
        <taxon>Pseudomonadota</taxon>
        <taxon>Alphaproteobacteria</taxon>
        <taxon>Rickettsiales</taxon>
        <taxon>Rickettsiaceae</taxon>
        <taxon>Rickettsieae</taxon>
        <taxon>Rickettsia</taxon>
        <taxon>typhus group</taxon>
    </lineage>
</organism>
<keyword id="KW-0143">Chaperone</keyword>
<keyword id="KW-1185">Reference proteome</keyword>